<accession>P9WGP5</accession>
<accession>L0TF13</accession>
<accession>O05885</accession>
<accession>P0A5Y8</accession>
<accession>P71494</accession>
<protein>
    <recommendedName>
        <fullName evidence="2">Protein translocase subunit SecA 1</fullName>
        <shortName>tbSecA</shortName>
        <ecNumber evidence="2">7.4.2.8</ecNumber>
    </recommendedName>
</protein>
<feature type="chain" id="PRO_0000109598" description="Protein translocase subunit SecA 1">
    <location>
        <begin position="1"/>
        <end position="949"/>
    </location>
</feature>
<feature type="region of interest" description="Disordered" evidence="3">
    <location>
        <begin position="869"/>
        <end position="949"/>
    </location>
</feature>
<feature type="compositionally biased region" description="Basic and acidic residues" evidence="3">
    <location>
        <begin position="925"/>
        <end position="934"/>
    </location>
</feature>
<feature type="binding site" evidence="2">
    <location>
        <position position="86"/>
    </location>
    <ligand>
        <name>ATP</name>
        <dbReference type="ChEBI" id="CHEBI:30616"/>
    </ligand>
</feature>
<feature type="binding site" evidence="2">
    <location>
        <begin position="104"/>
        <end position="108"/>
    </location>
    <ligand>
        <name>ATP</name>
        <dbReference type="ChEBI" id="CHEBI:30616"/>
    </ligand>
</feature>
<feature type="binding site" evidence="2">
    <location>
        <position position="493"/>
    </location>
    <ligand>
        <name>ATP</name>
        <dbReference type="ChEBI" id="CHEBI:30616"/>
    </ligand>
</feature>
<feature type="helix" evidence="4">
    <location>
        <begin position="2"/>
        <end position="7"/>
    </location>
</feature>
<feature type="helix" evidence="4">
    <location>
        <begin position="12"/>
        <end position="26"/>
    </location>
</feature>
<feature type="helix" evidence="4">
    <location>
        <begin position="28"/>
        <end position="32"/>
    </location>
</feature>
<feature type="helix" evidence="4">
    <location>
        <begin position="36"/>
        <end position="51"/>
    </location>
</feature>
<feature type="strand" evidence="4">
    <location>
        <begin position="53"/>
        <end position="55"/>
    </location>
</feature>
<feature type="helix" evidence="4">
    <location>
        <begin position="59"/>
        <end position="78"/>
    </location>
</feature>
<feature type="helix" evidence="4">
    <location>
        <begin position="84"/>
        <end position="94"/>
    </location>
</feature>
<feature type="strand" evidence="4">
    <location>
        <begin position="97"/>
        <end position="100"/>
    </location>
</feature>
<feature type="helix" evidence="4">
    <location>
        <begin position="107"/>
        <end position="110"/>
    </location>
</feature>
<feature type="helix" evidence="4">
    <location>
        <begin position="112"/>
        <end position="119"/>
    </location>
</feature>
<feature type="strand" evidence="4">
    <location>
        <begin position="125"/>
        <end position="131"/>
    </location>
</feature>
<feature type="helix" evidence="4">
    <location>
        <begin position="132"/>
        <end position="148"/>
    </location>
</feature>
<feature type="strand" evidence="4">
    <location>
        <begin position="153"/>
        <end position="155"/>
    </location>
</feature>
<feature type="helix" evidence="4">
    <location>
        <begin position="162"/>
        <end position="170"/>
    </location>
</feature>
<feature type="strand" evidence="4">
    <location>
        <begin position="171"/>
        <end position="177"/>
    </location>
</feature>
<feature type="helix" evidence="4">
    <location>
        <begin position="178"/>
        <end position="188"/>
    </location>
</feature>
<feature type="helix" evidence="4">
    <location>
        <begin position="194"/>
        <end position="196"/>
    </location>
</feature>
<feature type="strand" evidence="4">
    <location>
        <begin position="204"/>
        <end position="207"/>
    </location>
</feature>
<feature type="helix" evidence="4">
    <location>
        <begin position="210"/>
        <end position="214"/>
    </location>
</feature>
<feature type="helix" evidence="4">
    <location>
        <begin position="217"/>
        <end position="219"/>
    </location>
</feature>
<feature type="strand" evidence="4">
    <location>
        <begin position="222"/>
        <end position="227"/>
    </location>
</feature>
<feature type="helix" evidence="4">
    <location>
        <begin position="232"/>
        <end position="244"/>
    </location>
</feature>
<feature type="turn" evidence="4">
    <location>
        <begin position="247"/>
        <end position="249"/>
    </location>
</feature>
<feature type="strand" evidence="4">
    <location>
        <begin position="250"/>
        <end position="254"/>
    </location>
</feature>
<feature type="turn" evidence="4">
    <location>
        <begin position="255"/>
        <end position="258"/>
    </location>
</feature>
<feature type="strand" evidence="4">
    <location>
        <begin position="259"/>
        <end position="262"/>
    </location>
</feature>
<feature type="helix" evidence="4">
    <location>
        <begin position="264"/>
        <end position="274"/>
    </location>
</feature>
<feature type="helix" evidence="4">
    <location>
        <begin position="287"/>
        <end position="300"/>
    </location>
</feature>
<feature type="turn" evidence="4">
    <location>
        <begin position="304"/>
        <end position="306"/>
    </location>
</feature>
<feature type="strand" evidence="4">
    <location>
        <begin position="307"/>
        <end position="309"/>
    </location>
</feature>
<feature type="strand" evidence="4">
    <location>
        <begin position="314"/>
        <end position="317"/>
    </location>
</feature>
<feature type="strand" evidence="4">
    <location>
        <begin position="319"/>
        <end position="321"/>
    </location>
</feature>
<feature type="helix" evidence="4">
    <location>
        <begin position="334"/>
        <end position="341"/>
    </location>
</feature>
<feature type="strand" evidence="4">
    <location>
        <begin position="350"/>
        <end position="356"/>
    </location>
</feature>
<feature type="helix" evidence="4">
    <location>
        <begin position="358"/>
        <end position="362"/>
    </location>
</feature>
<feature type="strand" evidence="4">
    <location>
        <begin position="365"/>
        <end position="373"/>
    </location>
</feature>
<feature type="helix" evidence="4">
    <location>
        <begin position="376"/>
        <end position="378"/>
    </location>
</feature>
<feature type="helix" evidence="4">
    <location>
        <begin position="379"/>
        <end position="386"/>
    </location>
</feature>
<feature type="strand" evidence="4">
    <location>
        <begin position="389"/>
        <end position="392"/>
    </location>
</feature>
<feature type="strand" evidence="4">
    <location>
        <begin position="407"/>
        <end position="410"/>
    </location>
</feature>
<feature type="helix" evidence="4">
    <location>
        <begin position="412"/>
        <end position="428"/>
    </location>
</feature>
<feature type="strand" evidence="4">
    <location>
        <begin position="433"/>
        <end position="438"/>
    </location>
</feature>
<feature type="helix" evidence="4">
    <location>
        <begin position="440"/>
        <end position="452"/>
    </location>
</feature>
<feature type="strand" evidence="4">
    <location>
        <begin position="458"/>
        <end position="460"/>
    </location>
</feature>
<feature type="helix" evidence="4">
    <location>
        <begin position="465"/>
        <end position="473"/>
    </location>
</feature>
<feature type="turn" evidence="4">
    <location>
        <begin position="474"/>
        <end position="476"/>
    </location>
</feature>
<feature type="strand" evidence="4">
    <location>
        <begin position="481"/>
        <end position="485"/>
    </location>
</feature>
<feature type="helix" evidence="4">
    <location>
        <begin position="500"/>
        <end position="510"/>
    </location>
</feature>
<feature type="turn" evidence="4">
    <location>
        <begin position="515"/>
        <end position="517"/>
    </location>
</feature>
<feature type="helix" evidence="4">
    <location>
        <begin position="519"/>
        <end position="536"/>
    </location>
</feature>
<feature type="helix" evidence="4">
    <location>
        <begin position="539"/>
        <end position="546"/>
    </location>
</feature>
<feature type="strand" evidence="4">
    <location>
        <begin position="549"/>
        <end position="554"/>
    </location>
</feature>
<feature type="helix" evidence="4">
    <location>
        <begin position="561"/>
        <end position="569"/>
    </location>
</feature>
<feature type="helix" evidence="4">
    <location>
        <begin position="573"/>
        <end position="575"/>
    </location>
</feature>
<feature type="strand" evidence="4">
    <location>
        <begin position="578"/>
        <end position="585"/>
    </location>
</feature>
<feature type="helix" evidence="4">
    <location>
        <begin position="589"/>
        <end position="593"/>
    </location>
</feature>
<feature type="helix" evidence="4">
    <location>
        <begin position="596"/>
        <end position="605"/>
    </location>
</feature>
<feature type="helix" evidence="4">
    <location>
        <begin position="617"/>
        <end position="663"/>
    </location>
</feature>
<feature type="helix" evidence="4">
    <location>
        <begin position="669"/>
        <end position="686"/>
    </location>
</feature>
<feature type="strand" evidence="4">
    <location>
        <begin position="689"/>
        <end position="691"/>
    </location>
</feature>
<feature type="helix" evidence="4">
    <location>
        <begin position="698"/>
        <end position="708"/>
    </location>
</feature>
<feature type="turn" evidence="4">
    <location>
        <begin position="715"/>
        <end position="718"/>
    </location>
</feature>
<feature type="helix" evidence="4">
    <location>
        <begin position="736"/>
        <end position="758"/>
    </location>
</feature>
<feature type="helix" evidence="4">
    <location>
        <begin position="762"/>
        <end position="793"/>
    </location>
</feature>
<feature type="helix" evidence="4">
    <location>
        <begin position="794"/>
        <end position="796"/>
    </location>
</feature>
<feature type="helix" evidence="4">
    <location>
        <begin position="803"/>
        <end position="832"/>
    </location>
</feature>
<reference key="1">
    <citation type="journal article" date="1998" name="Nature">
        <title>Deciphering the biology of Mycobacterium tuberculosis from the complete genome sequence.</title>
        <authorList>
            <person name="Cole S.T."/>
            <person name="Brosch R."/>
            <person name="Parkhill J."/>
            <person name="Garnier T."/>
            <person name="Churcher C.M."/>
            <person name="Harris D.E."/>
            <person name="Gordon S.V."/>
            <person name="Eiglmeier K."/>
            <person name="Gas S."/>
            <person name="Barry C.E. III"/>
            <person name="Tekaia F."/>
            <person name="Badcock K."/>
            <person name="Basham D."/>
            <person name="Brown D."/>
            <person name="Chillingworth T."/>
            <person name="Connor R."/>
            <person name="Davies R.M."/>
            <person name="Devlin K."/>
            <person name="Feltwell T."/>
            <person name="Gentles S."/>
            <person name="Hamlin N."/>
            <person name="Holroyd S."/>
            <person name="Hornsby T."/>
            <person name="Jagels K."/>
            <person name="Krogh A."/>
            <person name="McLean J."/>
            <person name="Moule S."/>
            <person name="Murphy L.D."/>
            <person name="Oliver S."/>
            <person name="Osborne J."/>
            <person name="Quail M.A."/>
            <person name="Rajandream M.A."/>
            <person name="Rogers J."/>
            <person name="Rutter S."/>
            <person name="Seeger K."/>
            <person name="Skelton S."/>
            <person name="Squares S."/>
            <person name="Squares R."/>
            <person name="Sulston J.E."/>
            <person name="Taylor K."/>
            <person name="Whitehead S."/>
            <person name="Barrell B.G."/>
        </authorList>
    </citation>
    <scope>NUCLEOTIDE SEQUENCE [LARGE SCALE GENOMIC DNA]</scope>
    <source>
        <strain>ATCC 25618 / H37Rv</strain>
    </source>
</reference>
<reference key="2">
    <citation type="journal article" date="2011" name="Mol. Cell. Proteomics">
        <title>Proteogenomic analysis of Mycobacterium tuberculosis by high resolution mass spectrometry.</title>
        <authorList>
            <person name="Kelkar D.S."/>
            <person name="Kumar D."/>
            <person name="Kumar P."/>
            <person name="Balakrishnan L."/>
            <person name="Muthusamy B."/>
            <person name="Yadav A.K."/>
            <person name="Shrivastava P."/>
            <person name="Marimuthu A."/>
            <person name="Anand S."/>
            <person name="Sundaram H."/>
            <person name="Kingsbury R."/>
            <person name="Harsha H.C."/>
            <person name="Nair B."/>
            <person name="Prasad T.S."/>
            <person name="Chauhan D.S."/>
            <person name="Katoch K."/>
            <person name="Katoch V.M."/>
            <person name="Kumar P."/>
            <person name="Chaerkady R."/>
            <person name="Ramachandran S."/>
            <person name="Dash D."/>
            <person name="Pandey A."/>
        </authorList>
    </citation>
    <scope>IDENTIFICATION BY MASS SPECTROMETRY [LARGE SCALE ANALYSIS]</scope>
    <source>
        <strain>ATCC 25618 / H37Rv</strain>
    </source>
</reference>
<reference key="3">
    <citation type="journal article" date="2003" name="Proc. Natl. Acad. Sci. U.S.A.">
        <title>Crystal structure of Mycobacterium tuberculosis SecA, a preprotein translocating ATPase.</title>
        <authorList>
            <person name="Sharma V."/>
            <person name="Arockiasamy A."/>
            <person name="Ronning D.R."/>
            <person name="Savva C.G."/>
            <person name="Holzenburg A."/>
            <person name="Braunstein M."/>
            <person name="Jacobs W.R. Jr."/>
            <person name="Sacchettini J.C."/>
        </authorList>
    </citation>
    <scope>X-RAY CRYSTALLOGRAPHY (2.6 ANGSTROMS) OF 1-892 IN A DIMERIC FORM WITH AND WITHOUT BOUND ADP-BETA-S</scope>
    <source>
        <strain>ATCC 25618 / H37Rv</strain>
    </source>
</reference>
<dbReference type="EC" id="7.4.2.8" evidence="2"/>
<dbReference type="EMBL" id="AL123456">
    <property type="protein sequence ID" value="CCP46059.1"/>
    <property type="molecule type" value="Genomic_DNA"/>
</dbReference>
<dbReference type="PIR" id="B70592">
    <property type="entry name" value="B70592"/>
</dbReference>
<dbReference type="RefSeq" id="YP_177950.1">
    <property type="nucleotide sequence ID" value="NC_000962.3"/>
</dbReference>
<dbReference type="PDB" id="1NKT">
    <property type="method" value="X-ray"/>
    <property type="resolution" value="2.60 A"/>
    <property type="chains" value="A/B=2-892"/>
</dbReference>
<dbReference type="PDB" id="1NL3">
    <property type="method" value="X-ray"/>
    <property type="resolution" value="2.80 A"/>
    <property type="chains" value="A/B=2-892"/>
</dbReference>
<dbReference type="PDBsum" id="1NKT"/>
<dbReference type="PDBsum" id="1NL3"/>
<dbReference type="SMR" id="P9WGP5"/>
<dbReference type="FunCoup" id="P9WGP5">
    <property type="interactions" value="300"/>
</dbReference>
<dbReference type="STRING" id="83332.Rv3240c"/>
<dbReference type="PaxDb" id="83332-Rv3240c"/>
<dbReference type="DNASU" id="888860"/>
<dbReference type="GeneID" id="888860"/>
<dbReference type="KEGG" id="mtu:Rv3240c"/>
<dbReference type="KEGG" id="mtv:RVBD_3240c"/>
<dbReference type="TubercuList" id="Rv3240c"/>
<dbReference type="eggNOG" id="COG0653">
    <property type="taxonomic scope" value="Bacteria"/>
</dbReference>
<dbReference type="InParanoid" id="P9WGP5"/>
<dbReference type="OrthoDB" id="9805579at2"/>
<dbReference type="PhylomeDB" id="P9WGP5"/>
<dbReference type="BRENDA" id="7.4.2.5">
    <property type="organism ID" value="3445"/>
</dbReference>
<dbReference type="Reactome" id="R-HSA-1222387">
    <property type="pathway name" value="Tolerance of reactive oxygen produced by macrophages"/>
</dbReference>
<dbReference type="EvolutionaryTrace" id="P9WGP5"/>
<dbReference type="Proteomes" id="UP000001584">
    <property type="component" value="Chromosome"/>
</dbReference>
<dbReference type="GO" id="GO:0031522">
    <property type="term" value="C:cell envelope Sec protein transport complex"/>
    <property type="evidence" value="ECO:0000314"/>
    <property type="project" value="MTBBASE"/>
</dbReference>
<dbReference type="GO" id="GO:0005829">
    <property type="term" value="C:cytosol"/>
    <property type="evidence" value="ECO:0007005"/>
    <property type="project" value="MTBBASE"/>
</dbReference>
<dbReference type="GO" id="GO:0005576">
    <property type="term" value="C:extracellular region"/>
    <property type="evidence" value="ECO:0007005"/>
    <property type="project" value="MTBBASE"/>
</dbReference>
<dbReference type="GO" id="GO:0009274">
    <property type="term" value="C:peptidoglycan-based cell wall"/>
    <property type="evidence" value="ECO:0007005"/>
    <property type="project" value="MTBBASE"/>
</dbReference>
<dbReference type="GO" id="GO:0005886">
    <property type="term" value="C:plasma membrane"/>
    <property type="evidence" value="ECO:0007005"/>
    <property type="project" value="MTBBASE"/>
</dbReference>
<dbReference type="GO" id="GO:0005524">
    <property type="term" value="F:ATP binding"/>
    <property type="evidence" value="ECO:0000314"/>
    <property type="project" value="MTBBASE"/>
</dbReference>
<dbReference type="GO" id="GO:0016887">
    <property type="term" value="F:ATP hydrolysis activity"/>
    <property type="evidence" value="ECO:0000314"/>
    <property type="project" value="MTBBASE"/>
</dbReference>
<dbReference type="GO" id="GO:0008564">
    <property type="term" value="F:protein-exporting ATPase activity"/>
    <property type="evidence" value="ECO:0007669"/>
    <property type="project" value="UniProtKB-EC"/>
</dbReference>
<dbReference type="GO" id="GO:0065002">
    <property type="term" value="P:intracellular protein transmembrane transport"/>
    <property type="evidence" value="ECO:0007669"/>
    <property type="project" value="UniProtKB-UniRule"/>
</dbReference>
<dbReference type="GO" id="GO:0017038">
    <property type="term" value="P:protein import"/>
    <property type="evidence" value="ECO:0007669"/>
    <property type="project" value="InterPro"/>
</dbReference>
<dbReference type="GO" id="GO:0006605">
    <property type="term" value="P:protein targeting"/>
    <property type="evidence" value="ECO:0007669"/>
    <property type="project" value="UniProtKB-UniRule"/>
</dbReference>
<dbReference type="GO" id="GO:0043952">
    <property type="term" value="P:protein transport by the Sec complex"/>
    <property type="evidence" value="ECO:0000314"/>
    <property type="project" value="MTBBASE"/>
</dbReference>
<dbReference type="CDD" id="cd17928">
    <property type="entry name" value="DEXDc_SecA"/>
    <property type="match status" value="1"/>
</dbReference>
<dbReference type="CDD" id="cd18803">
    <property type="entry name" value="SF2_C_secA"/>
    <property type="match status" value="1"/>
</dbReference>
<dbReference type="FunFam" id="1.10.3060.10:FF:000002">
    <property type="entry name" value="Preprotein translocase subunit SecA"/>
    <property type="match status" value="1"/>
</dbReference>
<dbReference type="FunFam" id="3.40.50.300:FF:000113">
    <property type="entry name" value="Preprotein translocase subunit SecA"/>
    <property type="match status" value="1"/>
</dbReference>
<dbReference type="FunFam" id="3.40.50.300:FF:000334">
    <property type="entry name" value="Protein translocase subunit SecA"/>
    <property type="match status" value="1"/>
</dbReference>
<dbReference type="FunFam" id="3.90.1440.10:FF:000002">
    <property type="entry name" value="Protein translocase subunit SecA"/>
    <property type="match status" value="1"/>
</dbReference>
<dbReference type="Gene3D" id="1.10.3060.10">
    <property type="entry name" value="Helical scaffold and wing domains of SecA"/>
    <property type="match status" value="1"/>
</dbReference>
<dbReference type="Gene3D" id="3.40.50.300">
    <property type="entry name" value="P-loop containing nucleotide triphosphate hydrolases"/>
    <property type="match status" value="2"/>
</dbReference>
<dbReference type="Gene3D" id="3.90.1440.10">
    <property type="entry name" value="SecA, preprotein cross-linking domain"/>
    <property type="match status" value="1"/>
</dbReference>
<dbReference type="HAMAP" id="MF_01382">
    <property type="entry name" value="SecA"/>
    <property type="match status" value="1"/>
</dbReference>
<dbReference type="InterPro" id="IPR014001">
    <property type="entry name" value="Helicase_ATP-bd"/>
</dbReference>
<dbReference type="InterPro" id="IPR001650">
    <property type="entry name" value="Helicase_C-like"/>
</dbReference>
<dbReference type="InterPro" id="IPR027417">
    <property type="entry name" value="P-loop_NTPase"/>
</dbReference>
<dbReference type="InterPro" id="IPR000185">
    <property type="entry name" value="SecA"/>
</dbReference>
<dbReference type="InterPro" id="IPR020937">
    <property type="entry name" value="SecA_CS"/>
</dbReference>
<dbReference type="InterPro" id="IPR011115">
    <property type="entry name" value="SecA_DEAD"/>
</dbReference>
<dbReference type="InterPro" id="IPR014018">
    <property type="entry name" value="SecA_motor_DEAD"/>
</dbReference>
<dbReference type="InterPro" id="IPR011130">
    <property type="entry name" value="SecA_preprotein_X-link_dom"/>
</dbReference>
<dbReference type="InterPro" id="IPR044722">
    <property type="entry name" value="SecA_SF2_C"/>
</dbReference>
<dbReference type="InterPro" id="IPR011116">
    <property type="entry name" value="SecA_Wing/Scaffold"/>
</dbReference>
<dbReference type="InterPro" id="IPR036266">
    <property type="entry name" value="SecA_Wing/Scaffold_sf"/>
</dbReference>
<dbReference type="InterPro" id="IPR036670">
    <property type="entry name" value="SecA_X-link_sf"/>
</dbReference>
<dbReference type="NCBIfam" id="NF009538">
    <property type="entry name" value="PRK12904.1"/>
    <property type="match status" value="1"/>
</dbReference>
<dbReference type="NCBIfam" id="TIGR00963">
    <property type="entry name" value="secA"/>
    <property type="match status" value="1"/>
</dbReference>
<dbReference type="PANTHER" id="PTHR30612:SF0">
    <property type="entry name" value="CHLOROPLAST PROTEIN-TRANSPORTING ATPASE"/>
    <property type="match status" value="1"/>
</dbReference>
<dbReference type="PANTHER" id="PTHR30612">
    <property type="entry name" value="SECA INNER MEMBRANE COMPONENT OF SEC PROTEIN SECRETION SYSTEM"/>
    <property type="match status" value="1"/>
</dbReference>
<dbReference type="Pfam" id="PF21090">
    <property type="entry name" value="P-loop_SecA"/>
    <property type="match status" value="1"/>
</dbReference>
<dbReference type="Pfam" id="PF07517">
    <property type="entry name" value="SecA_DEAD"/>
    <property type="match status" value="1"/>
</dbReference>
<dbReference type="Pfam" id="PF01043">
    <property type="entry name" value="SecA_PP_bind"/>
    <property type="match status" value="1"/>
</dbReference>
<dbReference type="Pfam" id="PF07516">
    <property type="entry name" value="SecA_SW"/>
    <property type="match status" value="1"/>
</dbReference>
<dbReference type="PRINTS" id="PR00906">
    <property type="entry name" value="SECA"/>
</dbReference>
<dbReference type="SMART" id="SM00957">
    <property type="entry name" value="SecA_DEAD"/>
    <property type="match status" value="1"/>
</dbReference>
<dbReference type="SMART" id="SM00958">
    <property type="entry name" value="SecA_PP_bind"/>
    <property type="match status" value="1"/>
</dbReference>
<dbReference type="SUPFAM" id="SSF81886">
    <property type="entry name" value="Helical scaffold and wing domains of SecA"/>
    <property type="match status" value="1"/>
</dbReference>
<dbReference type="SUPFAM" id="SSF52540">
    <property type="entry name" value="P-loop containing nucleoside triphosphate hydrolases"/>
    <property type="match status" value="2"/>
</dbReference>
<dbReference type="SUPFAM" id="SSF81767">
    <property type="entry name" value="Pre-protein crosslinking domain of SecA"/>
    <property type="match status" value="1"/>
</dbReference>
<dbReference type="PROSITE" id="PS01312">
    <property type="entry name" value="SECA"/>
    <property type="match status" value="1"/>
</dbReference>
<dbReference type="PROSITE" id="PS51196">
    <property type="entry name" value="SECA_MOTOR_DEAD"/>
    <property type="match status" value="1"/>
</dbReference>
<organism>
    <name type="scientific">Mycobacterium tuberculosis (strain ATCC 25618 / H37Rv)</name>
    <dbReference type="NCBI Taxonomy" id="83332"/>
    <lineage>
        <taxon>Bacteria</taxon>
        <taxon>Bacillati</taxon>
        <taxon>Actinomycetota</taxon>
        <taxon>Actinomycetes</taxon>
        <taxon>Mycobacteriales</taxon>
        <taxon>Mycobacteriaceae</taxon>
        <taxon>Mycobacterium</taxon>
        <taxon>Mycobacterium tuberculosis complex</taxon>
    </lineage>
</organism>
<gene>
    <name evidence="2" type="primary">secA1</name>
    <name type="ordered locus">Rv3240c</name>
    <name type="ORF">MTCY20B11.15c</name>
</gene>
<sequence length="949" mass="106022">MLSKLLRLGEGRMVKRLKKVADYVGTLSDDVEKLTDAELRAKTDEFKRRLADQKNPETLDDLLPEAFAVAREAAWRVLDQRPFDVQVMGAAALHLGNVAEMKTGEGKTLTCVLPAYLNALAGNGVHIVTVNDYLAKRDSEWMGRVHRFLGLQVGVILATMTPDERRVAYNADITYGTNNEFGFDYLRDNMAHSLDDLVQRGHHYAIVDEVDSILIDEARTPLIISGPADGASNWYTEFARLAPLMEKDVHYEVDLRKRTVGVHEKGVEFVEDQLGIDNLYEAANSPLVSYLNNALKAKELFSRDKDYIVRDGEVLIVDEFTGRVLIGRRYNEGMHQAIEAKEHVEIKAENQTLATITLQNYFRLYDKLAGMTGTAQTEAAELHEIYKLGVVSIPTNMPMIREDQSDLIYKTEEAKYIAVVDDVAERYAKGQPVLIGTTSVERSEYLSRQFTKRRIPHNVLNAKYHEQEATIIAVAGRRGGVTVATNMAGRGTDIVLGGNVDFLTDQRLRERGLDPVETPEEYEAAWHSELPIVKEEASKEAKEVIEAGGLYVLGTERHESRRIDNQLRGRSGRQGDPGESRFYLSLGDELMRRFNGAALETLLTRLNLPDDVPIEAKMVTRAIKSAQTQVEQQNFEVRKNVLKYDEVMNQQRKVIYAERRRILEGENLKDQALDMVRDVITAYVDGATGEGYAEDWDLDALWTALKTLYPVGITADSLTRKDHEFERDDLTREELLEALLKDAERAYAAREAELEEIAGEGAMRQLERNVLLNVIDRKWREHLYEMDYLKEGIGLRAMAQRDPLVEYQREGYDMFMAMLDGMKEESVGFLFNVTVEAVPAPPVAPAAEPAELAEFAAAAAAAAQQRSAVDGGARERAPSALRAKGVASESPALTYSGPAEDGSAQVQRNGGGAHKTPAGVPAGASRRERREAARRQGRGAKPPKSVKKR</sequence>
<keyword id="KW-0002">3D-structure</keyword>
<keyword id="KW-0067">ATP-binding</keyword>
<keyword id="KW-1003">Cell membrane</keyword>
<keyword id="KW-0963">Cytoplasm</keyword>
<keyword id="KW-0472">Membrane</keyword>
<keyword id="KW-0547">Nucleotide-binding</keyword>
<keyword id="KW-0653">Protein transport</keyword>
<keyword id="KW-1185">Reference proteome</keyword>
<keyword id="KW-1278">Translocase</keyword>
<keyword id="KW-0811">Translocation</keyword>
<keyword id="KW-0813">Transport</keyword>
<proteinExistence type="evidence at protein level"/>
<evidence type="ECO:0000250" key="1"/>
<evidence type="ECO:0000255" key="2">
    <source>
        <dbReference type="HAMAP-Rule" id="MF_01382"/>
    </source>
</evidence>
<evidence type="ECO:0000256" key="3">
    <source>
        <dbReference type="SAM" id="MobiDB-lite"/>
    </source>
</evidence>
<evidence type="ECO:0007829" key="4">
    <source>
        <dbReference type="PDB" id="1NKT"/>
    </source>
</evidence>
<name>SECA1_MYCTU</name>
<comment type="function">
    <text evidence="2">Part of the Sec protein translocase complex. Interacts with the SecYEG preprotein conducting channel. Has a central role in coupling the hydrolysis of ATP to the transfer of proteins into and across the cell membrane, serving as an ATP-driven molecular motor driving the stepwise translocation of polypeptide chains across the membrane.</text>
</comment>
<comment type="catalytic activity">
    <reaction evidence="2">
        <text>ATP + H2O + cellular proteinSide 1 = ADP + phosphate + cellular proteinSide 2.</text>
        <dbReference type="EC" id="7.4.2.8"/>
    </reaction>
</comment>
<comment type="subunit">
    <text evidence="1">Part of the essential Sec protein translocation apparatus which comprises SecA, SecYEG and auxiliary proteins SecDF. Other proteins may also be involved (By similarity). Monomer and homodimer.</text>
</comment>
<comment type="subcellular location">
    <subcellularLocation>
        <location evidence="2">Cell membrane</location>
        <topology evidence="2">Peripheral membrane protein</topology>
        <orientation evidence="2">Cytoplasmic side</orientation>
    </subcellularLocation>
    <subcellularLocation>
        <location evidence="2">Cytoplasm</location>
    </subcellularLocation>
    <text evidence="2">Distribution is 50-50.</text>
</comment>
<comment type="similarity">
    <text evidence="2">Belongs to the SecA family.</text>
</comment>